<reference key="1">
    <citation type="journal article" date="2000" name="Nature">
        <title>Sequence and analysis of chromosome 3 of the plant Arabidopsis thaliana.</title>
        <authorList>
            <person name="Salanoubat M."/>
            <person name="Lemcke K."/>
            <person name="Rieger M."/>
            <person name="Ansorge W."/>
            <person name="Unseld M."/>
            <person name="Fartmann B."/>
            <person name="Valle G."/>
            <person name="Bloecker H."/>
            <person name="Perez-Alonso M."/>
            <person name="Obermaier B."/>
            <person name="Delseny M."/>
            <person name="Boutry M."/>
            <person name="Grivell L.A."/>
            <person name="Mache R."/>
            <person name="Puigdomenech P."/>
            <person name="De Simone V."/>
            <person name="Choisne N."/>
            <person name="Artiguenave F."/>
            <person name="Robert C."/>
            <person name="Brottier P."/>
            <person name="Wincker P."/>
            <person name="Cattolico L."/>
            <person name="Weissenbach J."/>
            <person name="Saurin W."/>
            <person name="Quetier F."/>
            <person name="Schaefer M."/>
            <person name="Mueller-Auer S."/>
            <person name="Gabel C."/>
            <person name="Fuchs M."/>
            <person name="Benes V."/>
            <person name="Wurmbach E."/>
            <person name="Drzonek H."/>
            <person name="Erfle H."/>
            <person name="Jordan N."/>
            <person name="Bangert S."/>
            <person name="Wiedelmann R."/>
            <person name="Kranz H."/>
            <person name="Voss H."/>
            <person name="Holland R."/>
            <person name="Brandt P."/>
            <person name="Nyakatura G."/>
            <person name="Vezzi A."/>
            <person name="D'Angelo M."/>
            <person name="Pallavicini A."/>
            <person name="Toppo S."/>
            <person name="Simionati B."/>
            <person name="Conrad A."/>
            <person name="Hornischer K."/>
            <person name="Kauer G."/>
            <person name="Loehnert T.-H."/>
            <person name="Nordsiek G."/>
            <person name="Reichelt J."/>
            <person name="Scharfe M."/>
            <person name="Schoen O."/>
            <person name="Bargues M."/>
            <person name="Terol J."/>
            <person name="Climent J."/>
            <person name="Navarro P."/>
            <person name="Collado C."/>
            <person name="Perez-Perez A."/>
            <person name="Ottenwaelder B."/>
            <person name="Duchemin D."/>
            <person name="Cooke R."/>
            <person name="Laudie M."/>
            <person name="Berger-Llauro C."/>
            <person name="Purnelle B."/>
            <person name="Masuy D."/>
            <person name="de Haan M."/>
            <person name="Maarse A.C."/>
            <person name="Alcaraz J.-P."/>
            <person name="Cottet A."/>
            <person name="Casacuberta E."/>
            <person name="Monfort A."/>
            <person name="Argiriou A."/>
            <person name="Flores M."/>
            <person name="Liguori R."/>
            <person name="Vitale D."/>
            <person name="Mannhaupt G."/>
            <person name="Haase D."/>
            <person name="Schoof H."/>
            <person name="Rudd S."/>
            <person name="Zaccaria P."/>
            <person name="Mewes H.-W."/>
            <person name="Mayer K.F.X."/>
            <person name="Kaul S."/>
            <person name="Town C.D."/>
            <person name="Koo H.L."/>
            <person name="Tallon L.J."/>
            <person name="Jenkins J."/>
            <person name="Rooney T."/>
            <person name="Rizzo M."/>
            <person name="Walts A."/>
            <person name="Utterback T."/>
            <person name="Fujii C.Y."/>
            <person name="Shea T.P."/>
            <person name="Creasy T.H."/>
            <person name="Haas B."/>
            <person name="Maiti R."/>
            <person name="Wu D."/>
            <person name="Peterson J."/>
            <person name="Van Aken S."/>
            <person name="Pai G."/>
            <person name="Militscher J."/>
            <person name="Sellers P."/>
            <person name="Gill J.E."/>
            <person name="Feldblyum T.V."/>
            <person name="Preuss D."/>
            <person name="Lin X."/>
            <person name="Nierman W.C."/>
            <person name="Salzberg S.L."/>
            <person name="White O."/>
            <person name="Venter J.C."/>
            <person name="Fraser C.M."/>
            <person name="Kaneko T."/>
            <person name="Nakamura Y."/>
            <person name="Sato S."/>
            <person name="Kato T."/>
            <person name="Asamizu E."/>
            <person name="Sasamoto S."/>
            <person name="Kimura T."/>
            <person name="Idesawa K."/>
            <person name="Kawashima K."/>
            <person name="Kishida Y."/>
            <person name="Kiyokawa C."/>
            <person name="Kohara M."/>
            <person name="Matsumoto M."/>
            <person name="Matsuno A."/>
            <person name="Muraki A."/>
            <person name="Nakayama S."/>
            <person name="Nakazaki N."/>
            <person name="Shinpo S."/>
            <person name="Takeuchi C."/>
            <person name="Wada T."/>
            <person name="Watanabe A."/>
            <person name="Yamada M."/>
            <person name="Yasuda M."/>
            <person name="Tabata S."/>
        </authorList>
    </citation>
    <scope>NUCLEOTIDE SEQUENCE [LARGE SCALE GENOMIC DNA]</scope>
    <source>
        <strain>cv. Columbia</strain>
    </source>
</reference>
<reference key="2">
    <citation type="journal article" date="2017" name="Plant J.">
        <title>Araport11: a complete reannotation of the Arabidopsis thaliana reference genome.</title>
        <authorList>
            <person name="Cheng C.Y."/>
            <person name="Krishnakumar V."/>
            <person name="Chan A.P."/>
            <person name="Thibaud-Nissen F."/>
            <person name="Schobel S."/>
            <person name="Town C.D."/>
        </authorList>
    </citation>
    <scope>GENOME REANNOTATION</scope>
    <source>
        <strain>cv. Columbia</strain>
    </source>
</reference>
<reference key="3">
    <citation type="submission" date="2007-01" db="EMBL/GenBank/DDBJ databases">
        <title>Arabidopsis ORF clones.</title>
        <authorList>
            <person name="Bautista V.R."/>
            <person name="Kim C.J."/>
            <person name="Chen H."/>
            <person name="Wu S.Y."/>
            <person name="De Los Reyes C."/>
            <person name="Ecker J.R."/>
        </authorList>
    </citation>
    <scope>NUCLEOTIDE SEQUENCE [LARGE SCALE MRNA]</scope>
    <source>
        <strain>cv. Columbia</strain>
    </source>
</reference>
<reference key="4">
    <citation type="submission" date="2009-03" db="EMBL/GenBank/DDBJ databases">
        <title>ORF cloning and analysis of Arabidopsis transcription factor genes.</title>
        <authorList>
            <person name="Fujita M."/>
            <person name="Mizukado S."/>
            <person name="Seki M."/>
            <person name="Shinozaki K."/>
            <person name="Mitsuda N."/>
            <person name="Takiguchi Y."/>
            <person name="Takagi M."/>
        </authorList>
    </citation>
    <scope>NUCLEOTIDE SEQUENCE [LARGE SCALE MRNA]</scope>
</reference>
<reference key="5">
    <citation type="journal article" date="2001" name="Plant Cell">
        <title>Repression domains of class II ERF transcriptional repressors share an essential motif for active repression.</title>
        <authorList>
            <person name="Ohta M."/>
            <person name="Matsui K."/>
            <person name="Hiratsu K."/>
            <person name="Shinshi H."/>
            <person name="Ohme-Takagi M."/>
        </authorList>
    </citation>
    <scope>FUNCTION</scope>
    <scope>DOMAIN</scope>
</reference>
<reference key="6">
    <citation type="journal article" date="2004" name="Development">
        <title>The Arabidopsis JAGGED gene encodes a zinc finger protein that promotes leaf tissue development.</title>
        <authorList>
            <person name="Ohno C.K."/>
            <person name="Reddy G.V."/>
            <person name="Heisler M.G."/>
            <person name="Meyerowitz E.M."/>
        </authorList>
    </citation>
    <scope>DOMAIN</scope>
</reference>
<reference key="7">
    <citation type="journal article" date="2008" name="Plant Cell Rep.">
        <title>Identification and characterization of COI1-dependent transcription factor genes involved in JA-mediated response to wounding in Arabidopsis plants.</title>
        <authorList>
            <person name="Wang Z."/>
            <person name="Cao G."/>
            <person name="Wang X."/>
            <person name="Miao J."/>
            <person name="Liu X."/>
            <person name="Chen Z."/>
            <person name="Qu L.-J."/>
            <person name="Gu H."/>
        </authorList>
    </citation>
    <scope>FUNCTION</scope>
    <scope>INDUCTION BY JASMONIC ACID AND WOUNDING</scope>
</reference>
<reference key="8">
    <citation type="journal article" date="2017" name="J. Exp. Bot.">
        <title>The Arabidopsis Cys2/His2 zinc finger transcription factor ZAT18 is a positive regulator of plant tolerance to drought stress.</title>
        <authorList>
            <person name="Yin M."/>
            <person name="Wang Y."/>
            <person name="Zhang L."/>
            <person name="Li J."/>
            <person name="Quan W."/>
            <person name="Yang L."/>
            <person name="Wang Q."/>
            <person name="Chan Z."/>
        </authorList>
    </citation>
    <scope>FUNCTION</scope>
    <scope>DISRUPTION PHENOTYPE</scope>
    <scope>INDUCTION BY ABIOTIC STRESSES</scope>
    <scope>TISSUE SPECIFICITY</scope>
    <scope>SUBCELLULAR LOCATION</scope>
</reference>
<sequence length="175" mass="20147">MKRDRSDYEESMKHIDIVESLMMLSRSFVVKQIDVKQSTGSKTNHNNHFECKTCNRKFDSFQALGGHRASHKKPKLIVDQEQVKHRNKENDMHKCTICDQMFGTGQALGGHMRKHRTSMITEQSIVPSVVYSRPVFNRCSSSKEILDLNLTPLENDLVLIFGKNLVPQIDLKFVN</sequence>
<accession>Q9LFG0</accession>
<comment type="function">
    <text evidence="3 4 7">Transcription factor involved in stress responses (Probable) (PubMed:28586434). Positive regulator of the jasmonic acid (JA)- mediated signaling pathway (PubMed:14973281). Triggers the up-regulation of LOX3, VSP2, PAL1 and PAL2 in a JA-dependent manner (PubMed:14973281). Promotes drought and osmotic stress tolerance by preventing reactive oxygen species (ROS) production (e.g. H(2)O(2)) (PubMed:28586434).</text>
</comment>
<comment type="subcellular location">
    <subcellularLocation>
        <location evidence="2 4">Nucleus</location>
    </subcellularLocation>
</comment>
<comment type="tissue specificity">
    <text evidence="4">Mostly expressed in stems, siliques and leaves, and, to a lower extent, in cotyledons, hypocotyls and roots.</text>
</comment>
<comment type="induction">
    <text evidence="3 4">Induced by jasmonic acid (MeJA) and gradually by wounding (PubMed:14973281). Accumulates in response to dehydration stress (PubMed:28586434). Induced by cold, osmotic, salt and drought stresses in roots and shoots, and by UV-B and wounding in shoots (PubMed:28586434).</text>
</comment>
<comment type="domain">
    <text evidence="7 8">Contains a slightly degenerated ERF-associated amphiphilic repression (EAR) motif, which may be involved in the activity of transcriptional repression.</text>
</comment>
<comment type="disruption phenotype">
    <text evidence="4">Decreased tolerance to drought stress.</text>
</comment>
<gene>
    <name evidence="6" type="primary">ZAT18</name>
    <name evidence="5" type="synonym">JAT11</name>
    <name evidence="9" type="ordered locus">At3g53600</name>
    <name evidence="10" type="ORF">F4P12.300</name>
</gene>
<feature type="chain" id="PRO_0000448580" description="Zinc finger protein ZAT18">
    <location>
        <begin position="1"/>
        <end position="175"/>
    </location>
</feature>
<feature type="zinc finger region" description="C2H2-type 1" evidence="1">
    <location>
        <begin position="49"/>
        <end position="71"/>
    </location>
</feature>
<feature type="zinc finger region" description="C2H2-type 2" evidence="1">
    <location>
        <begin position="93"/>
        <end position="115"/>
    </location>
</feature>
<feature type="short sequence motif" description="Nuclear localization signal" evidence="2">
    <location>
        <begin position="71"/>
        <end position="78"/>
    </location>
</feature>
<feature type="short sequence motif" description="EAR-like (transcriptional repression)" evidence="7">
    <location>
        <begin position="146"/>
        <end position="152"/>
    </location>
</feature>
<name>ZAT18_ARATH</name>
<protein>
    <recommendedName>
        <fullName evidence="6">Zinc finger protein ZAT18</fullName>
    </recommendedName>
</protein>
<evidence type="ECO:0000255" key="1">
    <source>
        <dbReference type="PROSITE-ProRule" id="PRU00042"/>
    </source>
</evidence>
<evidence type="ECO:0000255" key="2">
    <source>
        <dbReference type="PROSITE-ProRule" id="PRU00768"/>
    </source>
</evidence>
<evidence type="ECO:0000269" key="3">
    <source>
    </source>
</evidence>
<evidence type="ECO:0000269" key="4">
    <source>
    </source>
</evidence>
<evidence type="ECO:0000303" key="5">
    <source>
    </source>
</evidence>
<evidence type="ECO:0000303" key="6">
    <source>
    </source>
</evidence>
<evidence type="ECO:0000305" key="7">
    <source>
    </source>
</evidence>
<evidence type="ECO:0000305" key="8">
    <source>
    </source>
</evidence>
<evidence type="ECO:0000312" key="9">
    <source>
        <dbReference type="Araport" id="AT3G53600"/>
    </source>
</evidence>
<evidence type="ECO:0000312" key="10">
    <source>
        <dbReference type="EMBL" id="CAB67667.1"/>
    </source>
</evidence>
<organism>
    <name type="scientific">Arabidopsis thaliana</name>
    <name type="common">Mouse-ear cress</name>
    <dbReference type="NCBI Taxonomy" id="3702"/>
    <lineage>
        <taxon>Eukaryota</taxon>
        <taxon>Viridiplantae</taxon>
        <taxon>Streptophyta</taxon>
        <taxon>Embryophyta</taxon>
        <taxon>Tracheophyta</taxon>
        <taxon>Spermatophyta</taxon>
        <taxon>Magnoliopsida</taxon>
        <taxon>eudicotyledons</taxon>
        <taxon>Gunneridae</taxon>
        <taxon>Pentapetalae</taxon>
        <taxon>rosids</taxon>
        <taxon>malvids</taxon>
        <taxon>Brassicales</taxon>
        <taxon>Brassicaceae</taxon>
        <taxon>Camelineae</taxon>
        <taxon>Arabidopsis</taxon>
    </lineage>
</organism>
<dbReference type="EMBL" id="AL132966">
    <property type="protein sequence ID" value="CAB67667.1"/>
    <property type="molecule type" value="Genomic_DNA"/>
</dbReference>
<dbReference type="EMBL" id="CP002686">
    <property type="protein sequence ID" value="AEE79115.1"/>
    <property type="molecule type" value="Genomic_DNA"/>
</dbReference>
<dbReference type="EMBL" id="BT030044">
    <property type="protein sequence ID" value="ABN04782.1"/>
    <property type="molecule type" value="mRNA"/>
</dbReference>
<dbReference type="EMBL" id="AB493648">
    <property type="protein sequence ID" value="BAH30486.1"/>
    <property type="molecule type" value="mRNA"/>
</dbReference>
<dbReference type="PIR" id="T45900">
    <property type="entry name" value="T45900"/>
</dbReference>
<dbReference type="RefSeq" id="NP_190928.1">
    <property type="nucleotide sequence ID" value="NM_115220.2"/>
</dbReference>
<dbReference type="IntAct" id="Q9LFG0">
    <property type="interactions" value="5"/>
</dbReference>
<dbReference type="STRING" id="3702.Q9LFG0"/>
<dbReference type="PaxDb" id="3702-AT3G53600.1"/>
<dbReference type="DNASU" id="824528"/>
<dbReference type="EnsemblPlants" id="AT3G53600.1">
    <property type="protein sequence ID" value="AT3G53600.1"/>
    <property type="gene ID" value="AT3G53600"/>
</dbReference>
<dbReference type="GeneID" id="824528"/>
<dbReference type="Gramene" id="AT3G53600.1">
    <property type="protein sequence ID" value="AT3G53600.1"/>
    <property type="gene ID" value="AT3G53600"/>
</dbReference>
<dbReference type="KEGG" id="ath:AT3G53600"/>
<dbReference type="Araport" id="AT3G53600"/>
<dbReference type="TAIR" id="AT3G53600">
    <property type="gene designation" value="ZAT18"/>
</dbReference>
<dbReference type="eggNOG" id="KOG1721">
    <property type="taxonomic scope" value="Eukaryota"/>
</dbReference>
<dbReference type="HOGENOM" id="CLU_059471_3_0_1"/>
<dbReference type="InParanoid" id="Q9LFG0"/>
<dbReference type="OMA" id="HRTSMIT"/>
<dbReference type="PhylomeDB" id="Q9LFG0"/>
<dbReference type="PRO" id="PR:Q9LFG0"/>
<dbReference type="Proteomes" id="UP000006548">
    <property type="component" value="Chromosome 3"/>
</dbReference>
<dbReference type="ExpressionAtlas" id="Q9LFG0">
    <property type="expression patterns" value="baseline and differential"/>
</dbReference>
<dbReference type="GO" id="GO:0005634">
    <property type="term" value="C:nucleus"/>
    <property type="evidence" value="ECO:0000314"/>
    <property type="project" value="TAIR"/>
</dbReference>
<dbReference type="GO" id="GO:0003700">
    <property type="term" value="F:DNA-binding transcription factor activity"/>
    <property type="evidence" value="ECO:0000250"/>
    <property type="project" value="TAIR"/>
</dbReference>
<dbReference type="GO" id="GO:0008270">
    <property type="term" value="F:zinc ion binding"/>
    <property type="evidence" value="ECO:0007669"/>
    <property type="project" value="UniProtKB-KW"/>
</dbReference>
<dbReference type="GO" id="GO:0042631">
    <property type="term" value="P:cellular response to water deprivation"/>
    <property type="evidence" value="ECO:0000315"/>
    <property type="project" value="TAIR"/>
</dbReference>
<dbReference type="GO" id="GO:1902584">
    <property type="term" value="P:positive regulation of response to water deprivation"/>
    <property type="evidence" value="ECO:0000315"/>
    <property type="project" value="UniProtKB"/>
</dbReference>
<dbReference type="GO" id="GO:0006355">
    <property type="term" value="P:regulation of DNA-templated transcription"/>
    <property type="evidence" value="ECO:0000315"/>
    <property type="project" value="UniProtKB"/>
</dbReference>
<dbReference type="GO" id="GO:2000022">
    <property type="term" value="P:regulation of jasmonic acid mediated signaling pathway"/>
    <property type="evidence" value="ECO:0000315"/>
    <property type="project" value="UniProtKB"/>
</dbReference>
<dbReference type="GO" id="GO:0009409">
    <property type="term" value="P:response to cold"/>
    <property type="evidence" value="ECO:0000270"/>
    <property type="project" value="UniProtKB"/>
</dbReference>
<dbReference type="GO" id="GO:0009753">
    <property type="term" value="P:response to jasmonic acid"/>
    <property type="evidence" value="ECO:0000270"/>
    <property type="project" value="UniProtKB"/>
</dbReference>
<dbReference type="GO" id="GO:0006970">
    <property type="term" value="P:response to osmotic stress"/>
    <property type="evidence" value="ECO:0000270"/>
    <property type="project" value="UniProtKB"/>
</dbReference>
<dbReference type="GO" id="GO:1902074">
    <property type="term" value="P:response to salt"/>
    <property type="evidence" value="ECO:0000270"/>
    <property type="project" value="UniProtKB"/>
</dbReference>
<dbReference type="GO" id="GO:0010224">
    <property type="term" value="P:response to UV-B"/>
    <property type="evidence" value="ECO:0000270"/>
    <property type="project" value="UniProtKB"/>
</dbReference>
<dbReference type="GO" id="GO:0009414">
    <property type="term" value="P:response to water deprivation"/>
    <property type="evidence" value="ECO:0000270"/>
    <property type="project" value="UniProtKB"/>
</dbReference>
<dbReference type="GO" id="GO:0009611">
    <property type="term" value="P:response to wounding"/>
    <property type="evidence" value="ECO:0000270"/>
    <property type="project" value="UniProtKB"/>
</dbReference>
<dbReference type="Gene3D" id="3.30.160.60">
    <property type="entry name" value="Classic Zinc Finger"/>
    <property type="match status" value="1"/>
</dbReference>
<dbReference type="InterPro" id="IPR036236">
    <property type="entry name" value="Znf_C2H2_sf"/>
</dbReference>
<dbReference type="InterPro" id="IPR013087">
    <property type="entry name" value="Znf_C2H2_type"/>
</dbReference>
<dbReference type="PANTHER" id="PTHR26374:SF360">
    <property type="entry name" value="ZINC FINGER PROTEIN ZAT18"/>
    <property type="match status" value="1"/>
</dbReference>
<dbReference type="PANTHER" id="PTHR26374">
    <property type="entry name" value="ZINC FINGER PROTEIN ZAT5"/>
    <property type="match status" value="1"/>
</dbReference>
<dbReference type="Pfam" id="PF13912">
    <property type="entry name" value="zf-C2H2_6"/>
    <property type="match status" value="2"/>
</dbReference>
<dbReference type="SMART" id="SM00355">
    <property type="entry name" value="ZnF_C2H2"/>
    <property type="match status" value="2"/>
</dbReference>
<dbReference type="SUPFAM" id="SSF57667">
    <property type="entry name" value="beta-beta-alpha zinc fingers"/>
    <property type="match status" value="1"/>
</dbReference>
<dbReference type="PROSITE" id="PS00028">
    <property type="entry name" value="ZINC_FINGER_C2H2_1"/>
    <property type="match status" value="2"/>
</dbReference>
<dbReference type="PROSITE" id="PS50157">
    <property type="entry name" value="ZINC_FINGER_C2H2_2"/>
    <property type="match status" value="2"/>
</dbReference>
<keyword id="KW-0479">Metal-binding</keyword>
<keyword id="KW-0539">Nucleus</keyword>
<keyword id="KW-1185">Reference proteome</keyword>
<keyword id="KW-0677">Repeat</keyword>
<keyword id="KW-0678">Repressor</keyword>
<keyword id="KW-0804">Transcription</keyword>
<keyword id="KW-0805">Transcription regulation</keyword>
<keyword id="KW-0862">Zinc</keyword>
<keyword id="KW-0863">Zinc-finger</keyword>
<proteinExistence type="evidence at transcript level"/>